<organismHost>
    <name type="scientific">Vitis vinifera</name>
    <name type="common">Grape</name>
    <dbReference type="NCBI Taxonomy" id="29760"/>
</organismHost>
<feature type="chain" id="PRO_0000402523" description="Protein P7">
    <location>
        <begin position="1"/>
        <end position="60"/>
    </location>
</feature>
<feature type="transmembrane region" description="Helical" evidence="1">
    <location>
        <begin position="28"/>
        <end position="48"/>
    </location>
</feature>
<proteinExistence type="predicted"/>
<keyword id="KW-1043">Host membrane</keyword>
<keyword id="KW-0472">Membrane</keyword>
<keyword id="KW-1185">Reference proteome</keyword>
<keyword id="KW-0812">Transmembrane</keyword>
<keyword id="KW-1133">Transmembrane helix</keyword>
<protein>
    <recommendedName>
        <fullName>Protein P7</fullName>
    </recommendedName>
    <alternativeName>
        <fullName>7 kDa protein</fullName>
    </alternativeName>
</protein>
<dbReference type="EMBL" id="AF037268">
    <property type="protein sequence ID" value="AAC40716.1"/>
    <property type="molecule type" value="Genomic_RNA"/>
</dbReference>
<dbReference type="RefSeq" id="NP_813807.1">
    <property type="nucleotide sequence ID" value="NC_004667.1"/>
</dbReference>
<dbReference type="SMR" id="O71197"/>
<dbReference type="KEGG" id="vg:1444475"/>
<dbReference type="Proteomes" id="UP000006707">
    <property type="component" value="Segment"/>
</dbReference>
<dbReference type="GO" id="GO:0033644">
    <property type="term" value="C:host cell membrane"/>
    <property type="evidence" value="ECO:0007669"/>
    <property type="project" value="UniProtKB-SubCell"/>
</dbReference>
<dbReference type="GO" id="GO:0016020">
    <property type="term" value="C:membrane"/>
    <property type="evidence" value="ECO:0007669"/>
    <property type="project" value="UniProtKB-KW"/>
</dbReference>
<sequence length="60" mass="6768">MRHLEKPIRVAVHYCVVRSDVCDGWDVFIGVTLIGMFISYYLYALISICRKGEGLTTSNG</sequence>
<accession>O71197</accession>
<name>P7_GLRV3</name>
<reference key="1">
    <citation type="journal article" date="1998" name="J. Gen. Virol.">
        <title>Nucleotide sequence of the 3'-terminal two-thirds of the grapevine leafroll-associated virus-3 genome reveals a typical monopartite closterovirus.</title>
        <authorList>
            <person name="Ling K.S."/>
            <person name="Zhu H.Y."/>
            <person name="Drong R.F."/>
            <person name="Slightom J.L."/>
            <person name="McFerson J.R."/>
            <person name="Gonsalves D."/>
        </authorList>
    </citation>
    <scope>NUCLEOTIDE SEQUENCE [GENOMIC RNA]</scope>
</reference>
<gene>
    <name type="ORF">ORF12</name>
</gene>
<organism>
    <name type="scientific">Grapevine leafroll-associated virus 3 (isolate United States/NY1)</name>
    <name type="common">GLRaV-3</name>
    <name type="synonym">Grapevine leafroll-associated closterovirus (isolate 109)</name>
    <dbReference type="NCBI Taxonomy" id="651354"/>
    <lineage>
        <taxon>Viruses</taxon>
        <taxon>Riboviria</taxon>
        <taxon>Orthornavirae</taxon>
        <taxon>Kitrinoviricota</taxon>
        <taxon>Alsuviricetes</taxon>
        <taxon>Martellivirales</taxon>
        <taxon>Closteroviridae</taxon>
        <taxon>Ampelovirus</taxon>
        <taxon>Grapevine leafroll-associated virus 3</taxon>
    </lineage>
</organism>
<comment type="subcellular location">
    <subcellularLocation>
        <location evidence="2">Host membrane</location>
        <topology evidence="2">Single-pass membrane protein</topology>
    </subcellularLocation>
</comment>
<evidence type="ECO:0000255" key="1"/>
<evidence type="ECO:0000305" key="2"/>